<proteinExistence type="evidence at protein level"/>
<comment type="function">
    <text evidence="2 3 5">Hydrolase with a preference for pyrimidine substrates. Has high activity with 5-methyl-dCTP, and much lower activity with CTP, dCTP, 5-hydroxy-dCTP, 2-hydroxy-dATP and 8-hydroxy-dGTP.</text>
</comment>
<comment type="catalytic activity">
    <reaction evidence="2 3 4 5">
        <text>CTP + H2O = CMP + diphosphate + H(+)</text>
        <dbReference type="Rhea" id="RHEA:27762"/>
        <dbReference type="ChEBI" id="CHEBI:15377"/>
        <dbReference type="ChEBI" id="CHEBI:15378"/>
        <dbReference type="ChEBI" id="CHEBI:33019"/>
        <dbReference type="ChEBI" id="CHEBI:37563"/>
        <dbReference type="ChEBI" id="CHEBI:60377"/>
        <dbReference type="EC" id="3.6.1.65"/>
    </reaction>
</comment>
<comment type="catalytic activity">
    <reaction evidence="2 3 4 5">
        <text>dCTP + H2O = dCMP + diphosphate + H(+)</text>
        <dbReference type="Rhea" id="RHEA:22636"/>
        <dbReference type="ChEBI" id="CHEBI:15377"/>
        <dbReference type="ChEBI" id="CHEBI:15378"/>
        <dbReference type="ChEBI" id="CHEBI:33019"/>
        <dbReference type="ChEBI" id="CHEBI:57566"/>
        <dbReference type="ChEBI" id="CHEBI:61481"/>
        <dbReference type="EC" id="3.6.1.65"/>
    </reaction>
</comment>
<comment type="cofactor">
    <cofactor evidence="2 4">
        <name>Mg(2+)</name>
        <dbReference type="ChEBI" id="CHEBI:18420"/>
    </cofactor>
    <cofactor evidence="2 4">
        <name>Mn(2+)</name>
        <dbReference type="ChEBI" id="CHEBI:29035"/>
    </cofactor>
    <text evidence="2 4">Divalent metal ions. Mg(2+) or Mn(2+).</text>
</comment>
<comment type="biophysicochemical properties">
    <kinetics>
        <KM evidence="2 5">0.028 mM for 5-methyl-dCTP</KM>
        <KM evidence="2 5">0.027 mM for 2-hydroxy-dATP</KM>
        <KM evidence="2 5">0.41 mM for 8-hydroxy-dGTP</KM>
        <KM evidence="2 5">0.99 mM for dCTP</KM>
    </kinetics>
    <phDependence>
        <text evidence="2 5">Optimum pH is 8.5-9.</text>
    </phDependence>
</comment>
<comment type="subunit">
    <text evidence="6">Monomer.</text>
</comment>
<comment type="interaction">
    <interactant intactId="EBI-545184">
        <id>P77788</id>
    </interactant>
    <interactant intactId="EBI-545190">
        <id>P03813</id>
        <label>ygeA</label>
    </interactant>
    <organismsDiffer>false</organismsDiffer>
    <experiments>2</experiments>
</comment>
<comment type="similarity">
    <text evidence="7">Belongs to the Nudix hydrolase family.</text>
</comment>
<accession>P77788</accession>
<evidence type="ECO:0000255" key="1">
    <source>
        <dbReference type="PROSITE-ProRule" id="PRU00794"/>
    </source>
</evidence>
<evidence type="ECO:0000269" key="2">
    <source>
    </source>
</evidence>
<evidence type="ECO:0000269" key="3">
    <source>
    </source>
</evidence>
<evidence type="ECO:0000269" key="4">
    <source>
    </source>
</evidence>
<evidence type="ECO:0000269" key="5">
    <source>
    </source>
</evidence>
<evidence type="ECO:0000269" key="6">
    <source>
    </source>
</evidence>
<evidence type="ECO:0000305" key="7"/>
<evidence type="ECO:0007829" key="8">
    <source>
        <dbReference type="PDB" id="2RRK"/>
    </source>
</evidence>
<dbReference type="EC" id="3.6.1.65" evidence="2 3 4 5"/>
<dbReference type="EMBL" id="U00096">
    <property type="protein sequence ID" value="AAC74829.1"/>
    <property type="molecule type" value="Genomic_DNA"/>
</dbReference>
<dbReference type="EMBL" id="AP009048">
    <property type="protein sequence ID" value="BAA15549.1"/>
    <property type="molecule type" value="Genomic_DNA"/>
</dbReference>
<dbReference type="PIR" id="G64935">
    <property type="entry name" value="G64935"/>
</dbReference>
<dbReference type="RefSeq" id="NP_416273.1">
    <property type="nucleotide sequence ID" value="NC_000913.3"/>
</dbReference>
<dbReference type="RefSeq" id="WP_000781888.1">
    <property type="nucleotide sequence ID" value="NZ_LN832404.1"/>
</dbReference>
<dbReference type="PDB" id="2RRK">
    <property type="method" value="NMR"/>
    <property type="chains" value="A=1-135"/>
</dbReference>
<dbReference type="PDBsum" id="2RRK"/>
<dbReference type="BMRB" id="P77788"/>
<dbReference type="SMR" id="P77788"/>
<dbReference type="BioGRID" id="4260320">
    <property type="interactions" value="122"/>
</dbReference>
<dbReference type="DIP" id="DIP-10376N"/>
<dbReference type="FunCoup" id="P77788">
    <property type="interactions" value="251"/>
</dbReference>
<dbReference type="IntAct" id="P77788">
    <property type="interactions" value="3"/>
</dbReference>
<dbReference type="STRING" id="511145.b1759"/>
<dbReference type="PaxDb" id="511145-b1759"/>
<dbReference type="EnsemblBacteria" id="AAC74829">
    <property type="protein sequence ID" value="AAC74829"/>
    <property type="gene ID" value="b1759"/>
</dbReference>
<dbReference type="GeneID" id="946277"/>
<dbReference type="KEGG" id="ecj:JW1748"/>
<dbReference type="KEGG" id="eco:b1759"/>
<dbReference type="KEGG" id="ecoc:C3026_10040"/>
<dbReference type="PATRIC" id="fig|1411691.4.peg.496"/>
<dbReference type="EchoBASE" id="EB3765"/>
<dbReference type="eggNOG" id="COG0494">
    <property type="taxonomic scope" value="Bacteria"/>
</dbReference>
<dbReference type="HOGENOM" id="CLU_037162_19_1_6"/>
<dbReference type="InParanoid" id="P77788"/>
<dbReference type="OMA" id="HADQPGM"/>
<dbReference type="OrthoDB" id="9810648at2"/>
<dbReference type="PhylomeDB" id="P77788"/>
<dbReference type="BioCyc" id="EcoCyc:G6954-MONOMER"/>
<dbReference type="BioCyc" id="MetaCyc:G6954-MONOMER"/>
<dbReference type="BRENDA" id="3.6.1.65">
    <property type="organism ID" value="2026"/>
</dbReference>
<dbReference type="SABIO-RK" id="P77788"/>
<dbReference type="EvolutionaryTrace" id="P77788"/>
<dbReference type="PRO" id="PR:P77788"/>
<dbReference type="Proteomes" id="UP000000625">
    <property type="component" value="Chromosome"/>
</dbReference>
<dbReference type="GO" id="GO:0035539">
    <property type="term" value="F:8-oxo-7,8-dihydrodeoxyguanosine triphosphate pyrophosphatase activity"/>
    <property type="evidence" value="ECO:0000318"/>
    <property type="project" value="GO_Central"/>
</dbReference>
<dbReference type="GO" id="GO:0008413">
    <property type="term" value="F:8-oxo-7,8-dihydroguanosine triphosphate pyrophosphatase activity"/>
    <property type="evidence" value="ECO:0000318"/>
    <property type="project" value="GO_Central"/>
</dbReference>
<dbReference type="GO" id="GO:0044715">
    <property type="term" value="F:8-oxo-dGDP phosphatase activity"/>
    <property type="evidence" value="ECO:0000318"/>
    <property type="project" value="GO_Central"/>
</dbReference>
<dbReference type="GO" id="GO:0044716">
    <property type="term" value="F:8-oxo-GDP phosphatase activity"/>
    <property type="evidence" value="ECO:0000318"/>
    <property type="project" value="GO_Central"/>
</dbReference>
<dbReference type="GO" id="GO:0047840">
    <property type="term" value="F:dCTP diphosphatase activity"/>
    <property type="evidence" value="ECO:0007669"/>
    <property type="project" value="RHEA"/>
</dbReference>
<dbReference type="GO" id="GO:0016787">
    <property type="term" value="F:hydrolase activity"/>
    <property type="evidence" value="ECO:0000314"/>
    <property type="project" value="EcoCyc"/>
</dbReference>
<dbReference type="GO" id="GO:0006281">
    <property type="term" value="P:DNA repair"/>
    <property type="evidence" value="ECO:0000318"/>
    <property type="project" value="GO_Central"/>
</dbReference>
<dbReference type="CDD" id="cd03425">
    <property type="entry name" value="NUDIX_MutT_NudA_like"/>
    <property type="match status" value="1"/>
</dbReference>
<dbReference type="FunFam" id="3.90.79.10:FF:000014">
    <property type="entry name" value="8-oxo-dGTP diphosphatase MutT"/>
    <property type="match status" value="1"/>
</dbReference>
<dbReference type="Gene3D" id="3.90.79.10">
    <property type="entry name" value="Nucleoside Triphosphate Pyrophosphohydrolase"/>
    <property type="match status" value="1"/>
</dbReference>
<dbReference type="InterPro" id="IPR047127">
    <property type="entry name" value="MutT-like"/>
</dbReference>
<dbReference type="InterPro" id="IPR020476">
    <property type="entry name" value="Nudix_hydrolase"/>
</dbReference>
<dbReference type="InterPro" id="IPR015797">
    <property type="entry name" value="NUDIX_hydrolase-like_dom_sf"/>
</dbReference>
<dbReference type="InterPro" id="IPR020084">
    <property type="entry name" value="NUDIX_hydrolase_CS"/>
</dbReference>
<dbReference type="InterPro" id="IPR000086">
    <property type="entry name" value="NUDIX_hydrolase_dom"/>
</dbReference>
<dbReference type="NCBIfam" id="NF007834">
    <property type="entry name" value="PRK10546.1"/>
    <property type="match status" value="1"/>
</dbReference>
<dbReference type="PANTHER" id="PTHR47707">
    <property type="entry name" value="8-OXO-DGTP DIPHOSPHATASE"/>
    <property type="match status" value="1"/>
</dbReference>
<dbReference type="PANTHER" id="PTHR47707:SF2">
    <property type="entry name" value="CTP PYROPHOSPHOHYDROLASE"/>
    <property type="match status" value="1"/>
</dbReference>
<dbReference type="Pfam" id="PF00293">
    <property type="entry name" value="NUDIX"/>
    <property type="match status" value="1"/>
</dbReference>
<dbReference type="PRINTS" id="PR00502">
    <property type="entry name" value="NUDIXFAMILY"/>
</dbReference>
<dbReference type="SUPFAM" id="SSF55811">
    <property type="entry name" value="Nudix"/>
    <property type="match status" value="1"/>
</dbReference>
<dbReference type="PROSITE" id="PS51462">
    <property type="entry name" value="NUDIX"/>
    <property type="match status" value="1"/>
</dbReference>
<dbReference type="PROSITE" id="PS00893">
    <property type="entry name" value="NUDIX_BOX"/>
    <property type="match status" value="1"/>
</dbReference>
<protein>
    <recommendedName>
        <fullName>CTP pyrophosphohydrolase</fullName>
        <ecNumber evidence="2 3 4 5">3.6.1.65</ecNumber>
    </recommendedName>
</protein>
<gene>
    <name type="primary">nudG</name>
    <name type="synonym">ynjG</name>
    <name type="ordered locus">b1759</name>
    <name type="ordered locus">JW1748</name>
</gene>
<reference key="1">
    <citation type="journal article" date="1996" name="DNA Res.">
        <title>A 570-kb DNA sequence of the Escherichia coli K-12 genome corresponding to the 28.0-40.1 min region on the linkage map.</title>
        <authorList>
            <person name="Aiba H."/>
            <person name="Baba T."/>
            <person name="Fujita K."/>
            <person name="Hayashi K."/>
            <person name="Inada T."/>
            <person name="Isono K."/>
            <person name="Itoh T."/>
            <person name="Kasai H."/>
            <person name="Kashimoto K."/>
            <person name="Kimura S."/>
            <person name="Kitakawa M."/>
            <person name="Kitagawa M."/>
            <person name="Makino K."/>
            <person name="Miki T."/>
            <person name="Mizobuchi K."/>
            <person name="Mori H."/>
            <person name="Mori T."/>
            <person name="Motomura K."/>
            <person name="Nakade S."/>
            <person name="Nakamura Y."/>
            <person name="Nashimoto H."/>
            <person name="Nishio Y."/>
            <person name="Oshima T."/>
            <person name="Saito N."/>
            <person name="Sampei G."/>
            <person name="Seki Y."/>
            <person name="Sivasundaram S."/>
            <person name="Tagami H."/>
            <person name="Takeda J."/>
            <person name="Takemoto K."/>
            <person name="Takeuchi Y."/>
            <person name="Wada C."/>
            <person name="Yamamoto Y."/>
            <person name="Horiuchi T."/>
        </authorList>
    </citation>
    <scope>NUCLEOTIDE SEQUENCE [LARGE SCALE GENOMIC DNA]</scope>
    <source>
        <strain>K12 / W3110 / ATCC 27325 / DSM 5911</strain>
    </source>
</reference>
<reference key="2">
    <citation type="journal article" date="1997" name="Science">
        <title>The complete genome sequence of Escherichia coli K-12.</title>
        <authorList>
            <person name="Blattner F.R."/>
            <person name="Plunkett G. III"/>
            <person name="Bloch C.A."/>
            <person name="Perna N.T."/>
            <person name="Burland V."/>
            <person name="Riley M."/>
            <person name="Collado-Vides J."/>
            <person name="Glasner J.D."/>
            <person name="Rode C.K."/>
            <person name="Mayhew G.F."/>
            <person name="Gregor J."/>
            <person name="Davis N.W."/>
            <person name="Kirkpatrick H.A."/>
            <person name="Goeden M.A."/>
            <person name="Rose D.J."/>
            <person name="Mau B."/>
            <person name="Shao Y."/>
        </authorList>
    </citation>
    <scope>NUCLEOTIDE SEQUENCE [LARGE SCALE GENOMIC DNA]</scope>
    <source>
        <strain>K12 / MG1655 / ATCC 47076</strain>
    </source>
</reference>
<reference key="3">
    <citation type="journal article" date="2006" name="Mol. Syst. Biol.">
        <title>Highly accurate genome sequences of Escherichia coli K-12 strains MG1655 and W3110.</title>
        <authorList>
            <person name="Hayashi K."/>
            <person name="Morooka N."/>
            <person name="Yamamoto Y."/>
            <person name="Fujita K."/>
            <person name="Isono K."/>
            <person name="Choi S."/>
            <person name="Ohtsubo E."/>
            <person name="Baba T."/>
            <person name="Wanner B.L."/>
            <person name="Mori H."/>
            <person name="Horiuchi T."/>
        </authorList>
    </citation>
    <scope>NUCLEOTIDE SEQUENCE [LARGE SCALE GENOMIC DNA]</scope>
    <source>
        <strain>K12 / W3110 / ATCC 27325 / DSM 5911</strain>
    </source>
</reference>
<reference key="4">
    <citation type="journal article" date="2001" name="J. Biol. Chem.">
        <title>Orf135 from Escherichia coli is a Nudix hydrolase specific for CTP, dCTP, and 5-methyl-dCTP.</title>
        <authorList>
            <person name="O'Handley S.F."/>
            <person name="Dunn C.A."/>
            <person name="Bessman M.J."/>
        </authorList>
    </citation>
    <scope>CATALYTIC ACTIVITY</scope>
    <scope>COFACTOR</scope>
    <scope>BIOPHYSICOCHEMICAL PROPERTIES</scope>
    <scope>FUNCTION</scope>
    <source>
        <strain>K12 / MG1655 / ATCC 47076</strain>
    </source>
</reference>
<reference key="5">
    <citation type="journal article" date="2002" name="DNA Repair">
        <title>The oxidized pyrimidine ribonucleotide, 5-hydroxy-CTP, is hydrolyzed efficiently by the Escherichia coli recombinant Orf135 protein.</title>
        <authorList>
            <person name="Fujikawa K."/>
            <person name="Kasai H."/>
        </authorList>
    </citation>
    <scope>CATALYTIC ACTIVITY</scope>
    <scope>FUNCTION</scope>
</reference>
<reference key="6">
    <citation type="journal article" date="2004" name="Biochem. Biophys. Res. Commun.">
        <title>Important amino acids in the phosphohydrolase module of Escherichia coli Orf135.</title>
        <authorList>
            <person name="Kamiya H."/>
            <person name="Iida E."/>
            <person name="Harashima H."/>
        </authorList>
    </citation>
    <scope>CATALYTIC ACTIVITY</scope>
    <scope>COFACTOR</scope>
    <scope>MUTAGENESIS OF GLY-36; GLY-37; LYS-38; GLU-43; ARG-51; GLU-52; LEU-53; GLU-55 AND GLU-56</scope>
</reference>
<reference key="7">
    <citation type="journal article" date="2005" name="Biochemistry">
        <title>Amino acid residues involved in substrate recognition of the Escherichia coli Orf135 protein.</title>
        <authorList>
            <person name="Iida E."/>
            <person name="Satou K."/>
            <person name="Mishima M."/>
            <person name="Kojima C."/>
            <person name="Harashima H."/>
            <person name="Kamiya H."/>
        </authorList>
    </citation>
    <scope>FUNCTION</scope>
    <scope>CATALYTIC ACTIVITY</scope>
    <scope>BIOPHYSICOCHEMICAL PROPERTIES</scope>
    <scope>MUTAGENESIS OF GLU-33; ARG-72; ARG-77 AND ASP-118</scope>
</reference>
<reference key="8">
    <citation type="journal article" date="2012" name="Biochem. Biophys. Res. Commun.">
        <title>Insights into substrate recognition by the Escherichia coli Orf135 protein through its solution structure.</title>
        <authorList>
            <person name="Kawasaki K."/>
            <person name="Kanaba T."/>
            <person name="Yoneyama M."/>
            <person name="Murata-Kamiya N."/>
            <person name="Kojima C."/>
            <person name="Ito Y."/>
            <person name="Kamiya H."/>
            <person name="Mishima M."/>
        </authorList>
    </citation>
    <scope>STRUCTURE BY NMR</scope>
    <scope>SUBUNIT</scope>
    <scope>SUBSTRATE-BINDING SITES</scope>
</reference>
<name>NUDG_ECOLI</name>
<organism>
    <name type="scientific">Escherichia coli (strain K12)</name>
    <dbReference type="NCBI Taxonomy" id="83333"/>
    <lineage>
        <taxon>Bacteria</taxon>
        <taxon>Pseudomonadati</taxon>
        <taxon>Pseudomonadota</taxon>
        <taxon>Gammaproteobacteria</taxon>
        <taxon>Enterobacterales</taxon>
        <taxon>Enterobacteriaceae</taxon>
        <taxon>Escherichia</taxon>
    </lineage>
</organism>
<feature type="chain" id="PRO_0000056990" description="CTP pyrophosphohydrolase">
    <location>
        <begin position="1"/>
        <end position="135"/>
    </location>
</feature>
<feature type="domain" description="Nudix hydrolase" evidence="1">
    <location>
        <begin position="2"/>
        <end position="127"/>
    </location>
</feature>
<feature type="short sequence motif" description="Nudix box">
    <location>
        <begin position="37"/>
        <end position="58"/>
    </location>
</feature>
<feature type="binding site" evidence="7">
    <location>
        <begin position="34"/>
        <end position="39"/>
    </location>
    <ligand>
        <name>substrate</name>
    </ligand>
</feature>
<feature type="binding site" evidence="7">
    <location>
        <position position="72"/>
    </location>
    <ligand>
        <name>substrate</name>
    </ligand>
</feature>
<feature type="binding site" evidence="7">
    <location>
        <position position="118"/>
    </location>
    <ligand>
        <name>substrate</name>
    </ligand>
</feature>
<feature type="mutagenesis site" description="Increases enzyme activity with 2-hydroxy-ATP. Decreases enzyme activity with dCTP, 5-methyl-dCTP and 8-hydroxy-ATP." evidence="5">
    <original>E</original>
    <variation>A</variation>
    <variation>Q</variation>
    <location>
        <position position="33"/>
    </location>
</feature>
<feature type="mutagenesis site" description="Decreases enzyme activity with 2-hydroxy-ATP, dCTP, 5-dmethyl-CTP and 8-hydroxy-ATP." evidence="5">
    <original>E</original>
    <variation>D</variation>
    <location>
        <position position="33"/>
    </location>
</feature>
<feature type="mutagenesis site" description="Abolishes enzyme activity." evidence="4">
    <original>G</original>
    <variation>A</variation>
    <location>
        <position position="36"/>
    </location>
</feature>
<feature type="mutagenesis site" description="Abolishes enzyme activity." evidence="4">
    <original>G</original>
    <variation>A</variation>
    <location>
        <position position="37"/>
    </location>
</feature>
<feature type="mutagenesis site" description="Strongly reduces enzyme activity with dCTP, and to a lesser degree with 5-methyl-dCTP." evidence="4">
    <original>K</original>
    <variation>A</variation>
    <variation>R</variation>
    <location>
        <position position="38"/>
    </location>
</feature>
<feature type="mutagenesis site" description="Abolishes enzyme activity with dCTP and reduces enzyme activity with 5-methyl-dCTP." evidence="4">
    <original>E</original>
    <variation>A</variation>
    <location>
        <position position="43"/>
    </location>
</feature>
<feature type="mutagenesis site" description="Abolishes enzyme activity with dCTP. Nearly abolishes enzyme activity with 5-methyl-dCTP." evidence="4">
    <original>R</original>
    <variation>A</variation>
    <location>
        <position position="51"/>
    </location>
</feature>
<feature type="mutagenesis site" description="Abolishes enzyme activity." evidence="4">
    <original>E</original>
    <variation>A</variation>
    <variation>D</variation>
    <variation>Q</variation>
    <location>
        <position position="52"/>
    </location>
</feature>
<feature type="mutagenesis site" description="Reduces enzyme activity." evidence="4">
    <original>L</original>
    <variation>A</variation>
    <location>
        <position position="53"/>
    </location>
</feature>
<feature type="mutagenesis site" description="Abolishes enzyme activity with dCTP and reduces enzyme activity with 5-methyl-dCTP." evidence="4">
    <original>E</original>
    <variation>A</variation>
    <location>
        <position position="55"/>
    </location>
</feature>
<feature type="mutagenesis site" description="Abolishes enzyme activity with dCTP and reduces enzyme activity with 5-methyl-dCTP." evidence="4">
    <original>E</original>
    <variation>D</variation>
    <variation>Q</variation>
    <location>
        <position position="55"/>
    </location>
</feature>
<feature type="mutagenesis site" description="Abolishes enzyme activity." evidence="4">
    <original>E</original>
    <variation>A</variation>
    <variation>D</variation>
    <variation>Q</variation>
    <location>
        <position position="56"/>
    </location>
</feature>
<feature type="mutagenesis site" description="Strongly decreases the activity with 2-hydroxy-ATP." evidence="5">
    <original>R</original>
    <variation>A</variation>
    <location>
        <position position="72"/>
    </location>
</feature>
<feature type="mutagenesis site" description="No effect." evidence="5">
    <original>R</original>
    <variation>A</variation>
    <location>
        <position position="77"/>
    </location>
</feature>
<feature type="mutagenesis site" description="Abolishes enzyme activity with 2-hydroxy-ATP. No effect on activity with dCTP, 5-methyl-dCTP and 8-hydroxy-ATP." evidence="5">
    <original>D</original>
    <variation>A</variation>
    <variation>N</variation>
    <location>
        <position position="118"/>
    </location>
</feature>
<feature type="mutagenesis site" description="Abolishes enzyme activity with dCTP and 2-hydroxy-ATP and decreases activity with 5-methyl-dCTP. Increases activity with 8-hydroxy-ATP." evidence="5">
    <original>D</original>
    <variation>A</variation>
    <location>
        <position position="118"/>
    </location>
</feature>
<feature type="mutagenesis site" description="Increases the activity with 2-hydroxy-ATP. Strongly decreases activity with 8-hydroxy-ATP." evidence="5">
    <original>D</original>
    <variation>E</variation>
    <location>
        <position position="118"/>
    </location>
</feature>
<feature type="strand" evidence="8">
    <location>
        <begin position="3"/>
        <end position="13"/>
    </location>
</feature>
<feature type="strand" evidence="8">
    <location>
        <begin position="16"/>
        <end position="21"/>
    </location>
</feature>
<feature type="strand" evidence="8">
    <location>
        <begin position="36"/>
        <end position="38"/>
    </location>
</feature>
<feature type="helix" evidence="8">
    <location>
        <begin position="45"/>
        <end position="56"/>
    </location>
</feature>
<feature type="strand" evidence="8">
    <location>
        <begin position="59"/>
        <end position="62"/>
    </location>
</feature>
<feature type="strand" evidence="8">
    <location>
        <begin position="65"/>
        <end position="74"/>
    </location>
</feature>
<feature type="strand" evidence="8">
    <location>
        <begin position="77"/>
        <end position="91"/>
    </location>
</feature>
<feature type="strand" evidence="8">
    <location>
        <begin position="101"/>
        <end position="104"/>
    </location>
</feature>
<feature type="helix" evidence="8">
    <location>
        <begin position="106"/>
        <end position="109"/>
    </location>
</feature>
<feature type="helix" evidence="8">
    <location>
        <begin position="118"/>
        <end position="131"/>
    </location>
</feature>
<sequence>MKMIEVVAAIIERDGKILLAQRPAQSDQAGLWEFAGGKVEPDESQRQALVRELREELGIEATVGEYVASHQREVSGRIIHLHAWHVPDFHGTLQAHEHQALVWCSPEEALQYPLAPADIPLLEAFMALRAARPAD</sequence>
<keyword id="KW-0002">3D-structure</keyword>
<keyword id="KW-0378">Hydrolase</keyword>
<keyword id="KW-0460">Magnesium</keyword>
<keyword id="KW-0464">Manganese</keyword>
<keyword id="KW-1185">Reference proteome</keyword>